<proteinExistence type="inferred from homology"/>
<keyword id="KW-0460">Magnesium</keyword>
<keyword id="KW-0464">Manganese</keyword>
<keyword id="KW-0474">Menaquinone biosynthesis</keyword>
<keyword id="KW-0479">Metal-binding</keyword>
<keyword id="KW-0786">Thiamine pyrophosphate</keyword>
<keyword id="KW-0808">Transferase</keyword>
<gene>
    <name evidence="1" type="primary">menD</name>
    <name type="ordered locus">RER_17040</name>
</gene>
<organism>
    <name type="scientific">Rhodococcus erythropolis (strain PR4 / NBRC 100887)</name>
    <dbReference type="NCBI Taxonomy" id="234621"/>
    <lineage>
        <taxon>Bacteria</taxon>
        <taxon>Bacillati</taxon>
        <taxon>Actinomycetota</taxon>
        <taxon>Actinomycetes</taxon>
        <taxon>Mycobacteriales</taxon>
        <taxon>Nocardiaceae</taxon>
        <taxon>Rhodococcus</taxon>
        <taxon>Rhodococcus erythropolis group</taxon>
    </lineage>
</organism>
<accession>C0ZV17</accession>
<comment type="function">
    <text evidence="1">Catalyzes the thiamine diphosphate-dependent decarboxylation of 2-oxoglutarate and the subsequent addition of the resulting succinic semialdehyde-thiamine pyrophosphate anion to isochorismate to yield 2-succinyl-5-enolpyruvyl-6-hydroxy-3-cyclohexene-1-carboxylate (SEPHCHC).</text>
</comment>
<comment type="catalytic activity">
    <reaction evidence="1">
        <text>isochorismate + 2-oxoglutarate + H(+) = 5-enolpyruvoyl-6-hydroxy-2-succinyl-cyclohex-3-ene-1-carboxylate + CO2</text>
        <dbReference type="Rhea" id="RHEA:25593"/>
        <dbReference type="ChEBI" id="CHEBI:15378"/>
        <dbReference type="ChEBI" id="CHEBI:16526"/>
        <dbReference type="ChEBI" id="CHEBI:16810"/>
        <dbReference type="ChEBI" id="CHEBI:29780"/>
        <dbReference type="ChEBI" id="CHEBI:58818"/>
        <dbReference type="EC" id="2.2.1.9"/>
    </reaction>
</comment>
<comment type="cofactor">
    <cofactor evidence="1">
        <name>Mg(2+)</name>
        <dbReference type="ChEBI" id="CHEBI:18420"/>
    </cofactor>
    <cofactor evidence="1">
        <name>Mn(2+)</name>
        <dbReference type="ChEBI" id="CHEBI:29035"/>
    </cofactor>
</comment>
<comment type="cofactor">
    <cofactor evidence="1">
        <name>thiamine diphosphate</name>
        <dbReference type="ChEBI" id="CHEBI:58937"/>
    </cofactor>
    <text evidence="1">Binds 1 thiamine pyrophosphate per subunit.</text>
</comment>
<comment type="pathway">
    <text evidence="1">Quinol/quinone metabolism; 1,4-dihydroxy-2-naphthoate biosynthesis; 1,4-dihydroxy-2-naphthoate from chorismate: step 2/7.</text>
</comment>
<comment type="pathway">
    <text evidence="1">Quinol/quinone metabolism; menaquinone biosynthesis.</text>
</comment>
<comment type="subunit">
    <text evidence="1">Homodimer.</text>
</comment>
<comment type="similarity">
    <text evidence="1">Belongs to the TPP enzyme family. MenD subfamily.</text>
</comment>
<dbReference type="EC" id="2.2.1.9" evidence="1"/>
<dbReference type="EMBL" id="AP008957">
    <property type="protein sequence ID" value="BAH32412.1"/>
    <property type="molecule type" value="Genomic_DNA"/>
</dbReference>
<dbReference type="RefSeq" id="WP_020906813.1">
    <property type="nucleotide sequence ID" value="NC_012490.1"/>
</dbReference>
<dbReference type="SMR" id="C0ZV17"/>
<dbReference type="GeneID" id="57488160"/>
<dbReference type="KEGG" id="rer:RER_17040"/>
<dbReference type="eggNOG" id="COG1165">
    <property type="taxonomic scope" value="Bacteria"/>
</dbReference>
<dbReference type="HOGENOM" id="CLU_006051_4_0_11"/>
<dbReference type="UniPathway" id="UPA00079"/>
<dbReference type="UniPathway" id="UPA01057">
    <property type="reaction ID" value="UER00164"/>
</dbReference>
<dbReference type="Proteomes" id="UP000002204">
    <property type="component" value="Chromosome"/>
</dbReference>
<dbReference type="GO" id="GO:0070204">
    <property type="term" value="F:2-succinyl-5-enolpyruvyl-6-hydroxy-3-cyclohexene-1-carboxylic-acid synthase activity"/>
    <property type="evidence" value="ECO:0007669"/>
    <property type="project" value="UniProtKB-UniRule"/>
</dbReference>
<dbReference type="GO" id="GO:0000287">
    <property type="term" value="F:magnesium ion binding"/>
    <property type="evidence" value="ECO:0007669"/>
    <property type="project" value="UniProtKB-UniRule"/>
</dbReference>
<dbReference type="GO" id="GO:0030145">
    <property type="term" value="F:manganese ion binding"/>
    <property type="evidence" value="ECO:0007669"/>
    <property type="project" value="UniProtKB-UniRule"/>
</dbReference>
<dbReference type="GO" id="GO:0030976">
    <property type="term" value="F:thiamine pyrophosphate binding"/>
    <property type="evidence" value="ECO:0007669"/>
    <property type="project" value="UniProtKB-UniRule"/>
</dbReference>
<dbReference type="GO" id="GO:0009234">
    <property type="term" value="P:menaquinone biosynthetic process"/>
    <property type="evidence" value="ECO:0007669"/>
    <property type="project" value="UniProtKB-UniRule"/>
</dbReference>
<dbReference type="CDD" id="cd07037">
    <property type="entry name" value="TPP_PYR_MenD"/>
    <property type="match status" value="1"/>
</dbReference>
<dbReference type="CDD" id="cd02009">
    <property type="entry name" value="TPP_SHCHC_synthase"/>
    <property type="match status" value="1"/>
</dbReference>
<dbReference type="Gene3D" id="3.40.50.970">
    <property type="match status" value="2"/>
</dbReference>
<dbReference type="HAMAP" id="MF_01659">
    <property type="entry name" value="MenD"/>
    <property type="match status" value="1"/>
</dbReference>
<dbReference type="InterPro" id="IPR004433">
    <property type="entry name" value="MenaQ_synth_MenD"/>
</dbReference>
<dbReference type="InterPro" id="IPR029061">
    <property type="entry name" value="THDP-binding"/>
</dbReference>
<dbReference type="InterPro" id="IPR012001">
    <property type="entry name" value="Thiamin_PyroP_enz_TPP-bd_dom"/>
</dbReference>
<dbReference type="InterPro" id="IPR011766">
    <property type="entry name" value="TPP_enzyme_TPP-bd"/>
</dbReference>
<dbReference type="NCBIfam" id="TIGR00173">
    <property type="entry name" value="menD"/>
    <property type="match status" value="1"/>
</dbReference>
<dbReference type="PANTHER" id="PTHR42916">
    <property type="entry name" value="2-SUCCINYL-5-ENOLPYRUVYL-6-HYDROXY-3-CYCLOHEXENE-1-CARBOXYLATE SYNTHASE"/>
    <property type="match status" value="1"/>
</dbReference>
<dbReference type="PANTHER" id="PTHR42916:SF1">
    <property type="entry name" value="PROTEIN PHYLLO, CHLOROPLASTIC"/>
    <property type="match status" value="1"/>
</dbReference>
<dbReference type="Pfam" id="PF02775">
    <property type="entry name" value="TPP_enzyme_C"/>
    <property type="match status" value="1"/>
</dbReference>
<dbReference type="Pfam" id="PF02776">
    <property type="entry name" value="TPP_enzyme_N"/>
    <property type="match status" value="1"/>
</dbReference>
<dbReference type="PIRSF" id="PIRSF004983">
    <property type="entry name" value="MenD"/>
    <property type="match status" value="1"/>
</dbReference>
<dbReference type="SUPFAM" id="SSF52518">
    <property type="entry name" value="Thiamin diphosphate-binding fold (THDP-binding)"/>
    <property type="match status" value="2"/>
</dbReference>
<sequence>MNPSTAQATAVVDELVRGGVREVVLCPGSRNAPLAFALQAADLDGRLRLHMRIDERTAGFLALGLAIAGKRPVPIVMTSGTAVANLGPAVLEANYARVPLVVLSANRPYEMLGTGANQTVEQLGLFGSQVRATISLGLAEDDSTQNSQWRSAVCRVLAAARGTRSGNAGPVHFDIPLREPLVPDVHVHGPVPEGRPGGAAWTTTQNATLDVPVDLDLTADTVVISGHGSALRPELAGLPTVAEPTAPMHGIALHPLALSQLKPKQAIITGRPTLHRQVSKVLADPSVDVYALTTGPRWPDVSGNVLATGTRAVVTGTPDPAWIARCAALTEHAETAVRKQLDAHPKATGLHVAAAVMDALADGDQLLLGASNPVRDAALVSYPKPAVRVLSNRGVAGIDGTVSAAVGAALAYEGGRTVALMGDLTFLHDASGLLIGTGEPRPSDLTIVVANDDGGGIFELLEQGDPQYAGVFERVFGTPHGMDLAALCAAYRVPHAAVTVDALATTLAQPANGIRVLEVATDRSGLRELHASVRAQL</sequence>
<reference key="1">
    <citation type="submission" date="2005-03" db="EMBL/GenBank/DDBJ databases">
        <title>Comparison of the complete genome sequences of Rhodococcus erythropolis PR4 and Rhodococcus opacus B4.</title>
        <authorList>
            <person name="Takarada H."/>
            <person name="Sekine M."/>
            <person name="Hosoyama A."/>
            <person name="Yamada R."/>
            <person name="Fujisawa T."/>
            <person name="Omata S."/>
            <person name="Shimizu A."/>
            <person name="Tsukatani N."/>
            <person name="Tanikawa S."/>
            <person name="Fujita N."/>
            <person name="Harayama S."/>
        </authorList>
    </citation>
    <scope>NUCLEOTIDE SEQUENCE [LARGE SCALE GENOMIC DNA]</scope>
    <source>
        <strain>PR4 / NBRC 100887</strain>
    </source>
</reference>
<evidence type="ECO:0000255" key="1">
    <source>
        <dbReference type="HAMAP-Rule" id="MF_01659"/>
    </source>
</evidence>
<name>MEND_RHOE4</name>
<feature type="chain" id="PRO_1000215861" description="2-succinyl-5-enolpyruvyl-6-hydroxy-3-cyclohexene-1-carboxylate synthase">
    <location>
        <begin position="1"/>
        <end position="537"/>
    </location>
</feature>
<protein>
    <recommendedName>
        <fullName evidence="1">2-succinyl-5-enolpyruvyl-6-hydroxy-3-cyclohexene-1-carboxylate synthase</fullName>
        <shortName evidence="1">SEPHCHC synthase</shortName>
        <ecNumber evidence="1">2.2.1.9</ecNumber>
    </recommendedName>
    <alternativeName>
        <fullName evidence="1">Menaquinone biosynthesis protein MenD</fullName>
    </alternativeName>
</protein>